<gene>
    <name evidence="1" type="primary">lysS</name>
    <name type="ordered locus">Mmc1_1032</name>
</gene>
<dbReference type="EC" id="6.1.1.6" evidence="1"/>
<dbReference type="EMBL" id="CP000471">
    <property type="protein sequence ID" value="ABK43550.1"/>
    <property type="molecule type" value="Genomic_DNA"/>
</dbReference>
<dbReference type="RefSeq" id="WP_011712707.1">
    <property type="nucleotide sequence ID" value="NC_008576.1"/>
</dbReference>
<dbReference type="SMR" id="A0L6F7"/>
<dbReference type="STRING" id="156889.Mmc1_1032"/>
<dbReference type="KEGG" id="mgm:Mmc1_1032"/>
<dbReference type="eggNOG" id="COG1190">
    <property type="taxonomic scope" value="Bacteria"/>
</dbReference>
<dbReference type="HOGENOM" id="CLU_008255_6_0_5"/>
<dbReference type="OrthoDB" id="9801152at2"/>
<dbReference type="Proteomes" id="UP000002586">
    <property type="component" value="Chromosome"/>
</dbReference>
<dbReference type="GO" id="GO:0005829">
    <property type="term" value="C:cytosol"/>
    <property type="evidence" value="ECO:0007669"/>
    <property type="project" value="TreeGrafter"/>
</dbReference>
<dbReference type="GO" id="GO:0005524">
    <property type="term" value="F:ATP binding"/>
    <property type="evidence" value="ECO:0007669"/>
    <property type="project" value="UniProtKB-UniRule"/>
</dbReference>
<dbReference type="GO" id="GO:0004824">
    <property type="term" value="F:lysine-tRNA ligase activity"/>
    <property type="evidence" value="ECO:0007669"/>
    <property type="project" value="UniProtKB-UniRule"/>
</dbReference>
<dbReference type="GO" id="GO:0000287">
    <property type="term" value="F:magnesium ion binding"/>
    <property type="evidence" value="ECO:0007669"/>
    <property type="project" value="UniProtKB-UniRule"/>
</dbReference>
<dbReference type="GO" id="GO:0000049">
    <property type="term" value="F:tRNA binding"/>
    <property type="evidence" value="ECO:0007669"/>
    <property type="project" value="TreeGrafter"/>
</dbReference>
<dbReference type="GO" id="GO:0006430">
    <property type="term" value="P:lysyl-tRNA aminoacylation"/>
    <property type="evidence" value="ECO:0007669"/>
    <property type="project" value="UniProtKB-UniRule"/>
</dbReference>
<dbReference type="CDD" id="cd00775">
    <property type="entry name" value="LysRS_core"/>
    <property type="match status" value="1"/>
</dbReference>
<dbReference type="CDD" id="cd04322">
    <property type="entry name" value="LysRS_N"/>
    <property type="match status" value="1"/>
</dbReference>
<dbReference type="FunFam" id="2.40.50.140:FF:000024">
    <property type="entry name" value="Lysine--tRNA ligase"/>
    <property type="match status" value="1"/>
</dbReference>
<dbReference type="FunFam" id="3.30.930.10:FF:000001">
    <property type="entry name" value="Lysine--tRNA ligase"/>
    <property type="match status" value="1"/>
</dbReference>
<dbReference type="Gene3D" id="3.30.930.10">
    <property type="entry name" value="Bira Bifunctional Protein, Domain 2"/>
    <property type="match status" value="1"/>
</dbReference>
<dbReference type="Gene3D" id="2.40.50.140">
    <property type="entry name" value="Nucleic acid-binding proteins"/>
    <property type="match status" value="1"/>
</dbReference>
<dbReference type="HAMAP" id="MF_00252">
    <property type="entry name" value="Lys_tRNA_synth_class2"/>
    <property type="match status" value="1"/>
</dbReference>
<dbReference type="InterPro" id="IPR004364">
    <property type="entry name" value="Aa-tRNA-synt_II"/>
</dbReference>
<dbReference type="InterPro" id="IPR006195">
    <property type="entry name" value="aa-tRNA-synth_II"/>
</dbReference>
<dbReference type="InterPro" id="IPR045864">
    <property type="entry name" value="aa-tRNA-synth_II/BPL/LPL"/>
</dbReference>
<dbReference type="InterPro" id="IPR002313">
    <property type="entry name" value="Lys-tRNA-ligase_II"/>
</dbReference>
<dbReference type="InterPro" id="IPR044136">
    <property type="entry name" value="Lys-tRNA-ligase_II_N"/>
</dbReference>
<dbReference type="InterPro" id="IPR018149">
    <property type="entry name" value="Lys-tRNA-synth_II_C"/>
</dbReference>
<dbReference type="InterPro" id="IPR012340">
    <property type="entry name" value="NA-bd_OB-fold"/>
</dbReference>
<dbReference type="InterPro" id="IPR004365">
    <property type="entry name" value="NA-bd_OB_tRNA"/>
</dbReference>
<dbReference type="NCBIfam" id="TIGR00499">
    <property type="entry name" value="lysS_bact"/>
    <property type="match status" value="1"/>
</dbReference>
<dbReference type="NCBIfam" id="NF001756">
    <property type="entry name" value="PRK00484.1"/>
    <property type="match status" value="1"/>
</dbReference>
<dbReference type="PANTHER" id="PTHR42918:SF15">
    <property type="entry name" value="LYSINE--TRNA LIGASE, CHLOROPLASTIC_MITOCHONDRIAL"/>
    <property type="match status" value="1"/>
</dbReference>
<dbReference type="PANTHER" id="PTHR42918">
    <property type="entry name" value="LYSYL-TRNA SYNTHETASE"/>
    <property type="match status" value="1"/>
</dbReference>
<dbReference type="Pfam" id="PF00152">
    <property type="entry name" value="tRNA-synt_2"/>
    <property type="match status" value="1"/>
</dbReference>
<dbReference type="Pfam" id="PF01336">
    <property type="entry name" value="tRNA_anti-codon"/>
    <property type="match status" value="1"/>
</dbReference>
<dbReference type="PRINTS" id="PR00982">
    <property type="entry name" value="TRNASYNTHLYS"/>
</dbReference>
<dbReference type="SUPFAM" id="SSF55681">
    <property type="entry name" value="Class II aaRS and biotin synthetases"/>
    <property type="match status" value="1"/>
</dbReference>
<dbReference type="SUPFAM" id="SSF50249">
    <property type="entry name" value="Nucleic acid-binding proteins"/>
    <property type="match status" value="1"/>
</dbReference>
<dbReference type="PROSITE" id="PS50862">
    <property type="entry name" value="AA_TRNA_LIGASE_II"/>
    <property type="match status" value="1"/>
</dbReference>
<feature type="chain" id="PRO_1000199242" description="Lysine--tRNA ligase">
    <location>
        <begin position="1"/>
        <end position="501"/>
    </location>
</feature>
<feature type="binding site" evidence="1">
    <location>
        <position position="411"/>
    </location>
    <ligand>
        <name>Mg(2+)</name>
        <dbReference type="ChEBI" id="CHEBI:18420"/>
        <label>1</label>
    </ligand>
</feature>
<feature type="binding site" evidence="1">
    <location>
        <position position="418"/>
    </location>
    <ligand>
        <name>Mg(2+)</name>
        <dbReference type="ChEBI" id="CHEBI:18420"/>
        <label>1</label>
    </ligand>
</feature>
<feature type="binding site" evidence="1">
    <location>
        <position position="418"/>
    </location>
    <ligand>
        <name>Mg(2+)</name>
        <dbReference type="ChEBI" id="CHEBI:18420"/>
        <label>2</label>
    </ligand>
</feature>
<reference key="1">
    <citation type="journal article" date="2009" name="Appl. Environ. Microbiol.">
        <title>Complete genome sequence of the chemolithoautotrophic marine magnetotactic coccus strain MC-1.</title>
        <authorList>
            <person name="Schubbe S."/>
            <person name="Williams T.J."/>
            <person name="Xie G."/>
            <person name="Kiss H.E."/>
            <person name="Brettin T.S."/>
            <person name="Martinez D."/>
            <person name="Ross C.A."/>
            <person name="Schuler D."/>
            <person name="Cox B.L."/>
            <person name="Nealson K.H."/>
            <person name="Bazylinski D.A."/>
        </authorList>
    </citation>
    <scope>NUCLEOTIDE SEQUENCE [LARGE SCALE GENOMIC DNA]</scope>
    <source>
        <strain>ATCC BAA-1437 / JCM 17883 / MC-1</strain>
    </source>
</reference>
<sequence length="501" mass="56941">METNTMSQQEENQQIAARKVKLEALREAGVNPYPSGFKPDIDLASVSRANGNEMDPATLERVSVKVAGRIMLLRNFGKLTFATLQDESGRLQISAQRDVVGAELYSTVFRKIEVGDILGVEGHLFRTKVGELTVQVERFELLSKAVRPLPEKFHGLEDVETRYRQRYVDLIVNTEVREIFKTRSRVISRIRQFMEHRGFLEVETPMMHPIPGGATARPFVTHHNALDTDLYLRIAPELYLKRLIVGGFERVFEINRNFRNEGLSPRHNPEFTMMEFYQAYTDYRELMDFTEALVQDVVKDVNEGELTVAYQGQELDFSGPWARLTPAEAIVRYMEADAARITERGYLESLAESLGIKAETSWDDGMLLLTIFEEGVEHKLMAPTFIIDYPISVSPLSRRSDDNPDIAERFELFIAGREIANAFSELNDPADQASRFQKQVEAKDAGNEEAMHFDADYIRALEYGMPPTGGEGIGIDRLVMLLTDAANIREVLLFPQMKREG</sequence>
<keyword id="KW-0030">Aminoacyl-tRNA synthetase</keyword>
<keyword id="KW-0067">ATP-binding</keyword>
<keyword id="KW-0963">Cytoplasm</keyword>
<keyword id="KW-0436">Ligase</keyword>
<keyword id="KW-0460">Magnesium</keyword>
<keyword id="KW-0479">Metal-binding</keyword>
<keyword id="KW-0547">Nucleotide-binding</keyword>
<keyword id="KW-0648">Protein biosynthesis</keyword>
<keyword id="KW-1185">Reference proteome</keyword>
<name>SYK_MAGMM</name>
<protein>
    <recommendedName>
        <fullName evidence="1">Lysine--tRNA ligase</fullName>
        <ecNumber evidence="1">6.1.1.6</ecNumber>
    </recommendedName>
    <alternativeName>
        <fullName evidence="1">Lysyl-tRNA synthetase</fullName>
        <shortName evidence="1">LysRS</shortName>
    </alternativeName>
</protein>
<accession>A0L6F7</accession>
<evidence type="ECO:0000255" key="1">
    <source>
        <dbReference type="HAMAP-Rule" id="MF_00252"/>
    </source>
</evidence>
<organism>
    <name type="scientific">Magnetococcus marinus (strain ATCC BAA-1437 / JCM 17883 / MC-1)</name>
    <dbReference type="NCBI Taxonomy" id="156889"/>
    <lineage>
        <taxon>Bacteria</taxon>
        <taxon>Pseudomonadati</taxon>
        <taxon>Pseudomonadota</taxon>
        <taxon>Alphaproteobacteria</taxon>
        <taxon>Magnetococcales</taxon>
        <taxon>Magnetococcaceae</taxon>
        <taxon>Magnetococcus</taxon>
    </lineage>
</organism>
<proteinExistence type="inferred from homology"/>
<comment type="catalytic activity">
    <reaction evidence="1">
        <text>tRNA(Lys) + L-lysine + ATP = L-lysyl-tRNA(Lys) + AMP + diphosphate</text>
        <dbReference type="Rhea" id="RHEA:20792"/>
        <dbReference type="Rhea" id="RHEA-COMP:9696"/>
        <dbReference type="Rhea" id="RHEA-COMP:9697"/>
        <dbReference type="ChEBI" id="CHEBI:30616"/>
        <dbReference type="ChEBI" id="CHEBI:32551"/>
        <dbReference type="ChEBI" id="CHEBI:33019"/>
        <dbReference type="ChEBI" id="CHEBI:78442"/>
        <dbReference type="ChEBI" id="CHEBI:78529"/>
        <dbReference type="ChEBI" id="CHEBI:456215"/>
        <dbReference type="EC" id="6.1.1.6"/>
    </reaction>
</comment>
<comment type="cofactor">
    <cofactor evidence="1">
        <name>Mg(2+)</name>
        <dbReference type="ChEBI" id="CHEBI:18420"/>
    </cofactor>
    <text evidence="1">Binds 3 Mg(2+) ions per subunit.</text>
</comment>
<comment type="subunit">
    <text evidence="1">Homodimer.</text>
</comment>
<comment type="subcellular location">
    <subcellularLocation>
        <location evidence="1">Cytoplasm</location>
    </subcellularLocation>
</comment>
<comment type="similarity">
    <text evidence="1">Belongs to the class-II aminoacyl-tRNA synthetase family.</text>
</comment>